<comment type="function">
    <text evidence="1">The pyruvate dehydrogenase complex catalyzes the overall conversion of pyruvate to acetyl-CoA and CO(2). It contains multiple copies of three enzymatic components: pyruvate dehydrogenase (E1), dihydrolipoamide acetyltransferase (E2) and lipoamide dehydrogenase (E3) (By similarity).</text>
</comment>
<comment type="catalytic activity">
    <reaction>
        <text>N(6)-[(R)-dihydrolipoyl]-L-lysyl-[protein] + acetyl-CoA = N(6)-[(R)-S(8)-acetyldihydrolipoyl]-L-lysyl-[protein] + CoA</text>
        <dbReference type="Rhea" id="RHEA:17017"/>
        <dbReference type="Rhea" id="RHEA-COMP:10475"/>
        <dbReference type="Rhea" id="RHEA-COMP:10478"/>
        <dbReference type="ChEBI" id="CHEBI:57287"/>
        <dbReference type="ChEBI" id="CHEBI:57288"/>
        <dbReference type="ChEBI" id="CHEBI:83100"/>
        <dbReference type="ChEBI" id="CHEBI:83111"/>
        <dbReference type="EC" id="2.3.1.12"/>
    </reaction>
</comment>
<comment type="cofactor">
    <cofactor evidence="1">
        <name>(R)-lipoate</name>
        <dbReference type="ChEBI" id="CHEBI:83088"/>
    </cofactor>
    <text evidence="1">Binds 1 lipoyl cofactor covalently.</text>
</comment>
<comment type="subunit">
    <text evidence="1">Forms a 24-polypeptide structural core with octahedral symmetry.</text>
</comment>
<comment type="similarity">
    <text evidence="5">Belongs to the 2-oxoacid dehydrogenase family.</text>
</comment>
<accession>Q9ZD20</accession>
<organism>
    <name type="scientific">Rickettsia prowazekii (strain Madrid E)</name>
    <dbReference type="NCBI Taxonomy" id="272947"/>
    <lineage>
        <taxon>Bacteria</taxon>
        <taxon>Pseudomonadati</taxon>
        <taxon>Pseudomonadota</taxon>
        <taxon>Alphaproteobacteria</taxon>
        <taxon>Rickettsiales</taxon>
        <taxon>Rickettsiaceae</taxon>
        <taxon>Rickettsieae</taxon>
        <taxon>Rickettsia</taxon>
        <taxon>typhus group</taxon>
    </lineage>
</organism>
<gene>
    <name type="primary">pdhC</name>
    <name type="ordered locus">RP530</name>
</gene>
<feature type="chain" id="PRO_0000162286" description="Dihydrolipoyllysine-residue acetyltransferase component of pyruvate dehydrogenase complex">
    <location>
        <begin position="1"/>
        <end position="408"/>
    </location>
</feature>
<feature type="domain" description="Lipoyl-binding" evidence="3">
    <location>
        <begin position="2"/>
        <end position="78"/>
    </location>
</feature>
<feature type="domain" description="Peripheral subunit-binding (PSBD)" evidence="4">
    <location>
        <begin position="128"/>
        <end position="165"/>
    </location>
</feature>
<feature type="active site" evidence="2">
    <location>
        <position position="381"/>
    </location>
</feature>
<feature type="modified residue" description="N6-lipoyllysine" evidence="1 3">
    <location>
        <position position="43"/>
    </location>
</feature>
<name>ODP2_RICPR</name>
<proteinExistence type="inferred from homology"/>
<keyword id="KW-0012">Acyltransferase</keyword>
<keyword id="KW-0450">Lipoyl</keyword>
<keyword id="KW-1185">Reference proteome</keyword>
<keyword id="KW-0808">Transferase</keyword>
<dbReference type="EC" id="2.3.1.12"/>
<dbReference type="EMBL" id="AJ235272">
    <property type="protein sequence ID" value="CAA14979.1"/>
    <property type="molecule type" value="Genomic_DNA"/>
</dbReference>
<dbReference type="PIR" id="A71657">
    <property type="entry name" value="A71657"/>
</dbReference>
<dbReference type="RefSeq" id="NP_220903.1">
    <property type="nucleotide sequence ID" value="NC_000963.1"/>
</dbReference>
<dbReference type="RefSeq" id="WP_004599072.1">
    <property type="nucleotide sequence ID" value="NC_000963.1"/>
</dbReference>
<dbReference type="SMR" id="Q9ZD20"/>
<dbReference type="STRING" id="272947.gene:17555610"/>
<dbReference type="EnsemblBacteria" id="CAA14979">
    <property type="protein sequence ID" value="CAA14979"/>
    <property type="gene ID" value="CAA14979"/>
</dbReference>
<dbReference type="KEGG" id="rpr:RP530"/>
<dbReference type="PATRIC" id="fig|272947.5.peg.538"/>
<dbReference type="eggNOG" id="COG0508">
    <property type="taxonomic scope" value="Bacteria"/>
</dbReference>
<dbReference type="HOGENOM" id="CLU_016733_10_2_5"/>
<dbReference type="OrthoDB" id="9805770at2"/>
<dbReference type="Proteomes" id="UP000002480">
    <property type="component" value="Chromosome"/>
</dbReference>
<dbReference type="GO" id="GO:0045254">
    <property type="term" value="C:pyruvate dehydrogenase complex"/>
    <property type="evidence" value="ECO:0007669"/>
    <property type="project" value="InterPro"/>
</dbReference>
<dbReference type="GO" id="GO:0004742">
    <property type="term" value="F:dihydrolipoyllysine-residue acetyltransferase activity"/>
    <property type="evidence" value="ECO:0007669"/>
    <property type="project" value="UniProtKB-EC"/>
</dbReference>
<dbReference type="GO" id="GO:0006086">
    <property type="term" value="P:pyruvate decarboxylation to acetyl-CoA"/>
    <property type="evidence" value="ECO:0007669"/>
    <property type="project" value="InterPro"/>
</dbReference>
<dbReference type="CDD" id="cd06849">
    <property type="entry name" value="lipoyl_domain"/>
    <property type="match status" value="1"/>
</dbReference>
<dbReference type="FunFam" id="2.40.50.100:FF:000010">
    <property type="entry name" value="Acetyltransferase component of pyruvate dehydrogenase complex"/>
    <property type="match status" value="1"/>
</dbReference>
<dbReference type="FunFam" id="3.30.559.10:FF:000003">
    <property type="entry name" value="Acetyltransferase component of pyruvate dehydrogenase complex"/>
    <property type="match status" value="1"/>
</dbReference>
<dbReference type="Gene3D" id="2.40.50.100">
    <property type="match status" value="1"/>
</dbReference>
<dbReference type="Gene3D" id="3.30.559.10">
    <property type="entry name" value="Chloramphenicol acetyltransferase-like domain"/>
    <property type="match status" value="1"/>
</dbReference>
<dbReference type="Gene3D" id="4.10.320.10">
    <property type="entry name" value="E3-binding domain"/>
    <property type="match status" value="1"/>
</dbReference>
<dbReference type="InterPro" id="IPR003016">
    <property type="entry name" value="2-oxoA_DH_lipoyl-BS"/>
</dbReference>
<dbReference type="InterPro" id="IPR001078">
    <property type="entry name" value="2-oxoacid_DH_actylTfrase"/>
</dbReference>
<dbReference type="InterPro" id="IPR000089">
    <property type="entry name" value="Biotin_lipoyl"/>
</dbReference>
<dbReference type="InterPro" id="IPR023213">
    <property type="entry name" value="CAT-like_dom_sf"/>
</dbReference>
<dbReference type="InterPro" id="IPR045257">
    <property type="entry name" value="E2/Pdx1"/>
</dbReference>
<dbReference type="InterPro" id="IPR036625">
    <property type="entry name" value="E3-bd_dom_sf"/>
</dbReference>
<dbReference type="InterPro" id="IPR006257">
    <property type="entry name" value="LAT1"/>
</dbReference>
<dbReference type="InterPro" id="IPR004167">
    <property type="entry name" value="PSBD"/>
</dbReference>
<dbReference type="InterPro" id="IPR011053">
    <property type="entry name" value="Single_hybrid_motif"/>
</dbReference>
<dbReference type="NCBIfam" id="TIGR01349">
    <property type="entry name" value="PDHac_trf_mito"/>
    <property type="match status" value="1"/>
</dbReference>
<dbReference type="PANTHER" id="PTHR23151">
    <property type="entry name" value="DIHYDROLIPOAMIDE ACETYL/SUCCINYL-TRANSFERASE-RELATED"/>
    <property type="match status" value="1"/>
</dbReference>
<dbReference type="PANTHER" id="PTHR23151:SF90">
    <property type="entry name" value="DIHYDROLIPOYLLYSINE-RESIDUE ACETYLTRANSFERASE COMPONENT OF PYRUVATE DEHYDROGENASE COMPLEX, MITOCHONDRIAL-RELATED"/>
    <property type="match status" value="1"/>
</dbReference>
<dbReference type="Pfam" id="PF00198">
    <property type="entry name" value="2-oxoacid_dh"/>
    <property type="match status" value="1"/>
</dbReference>
<dbReference type="Pfam" id="PF00364">
    <property type="entry name" value="Biotin_lipoyl"/>
    <property type="match status" value="1"/>
</dbReference>
<dbReference type="Pfam" id="PF02817">
    <property type="entry name" value="E3_binding"/>
    <property type="match status" value="1"/>
</dbReference>
<dbReference type="SUPFAM" id="SSF52777">
    <property type="entry name" value="CoA-dependent acyltransferases"/>
    <property type="match status" value="1"/>
</dbReference>
<dbReference type="SUPFAM" id="SSF47005">
    <property type="entry name" value="Peripheral subunit-binding domain of 2-oxo acid dehydrogenase complex"/>
    <property type="match status" value="1"/>
</dbReference>
<dbReference type="SUPFAM" id="SSF51230">
    <property type="entry name" value="Single hybrid motif"/>
    <property type="match status" value="1"/>
</dbReference>
<dbReference type="PROSITE" id="PS50968">
    <property type="entry name" value="BIOTINYL_LIPOYL"/>
    <property type="match status" value="1"/>
</dbReference>
<dbReference type="PROSITE" id="PS00189">
    <property type="entry name" value="LIPOYL"/>
    <property type="match status" value="1"/>
</dbReference>
<dbReference type="PROSITE" id="PS51826">
    <property type="entry name" value="PSBD"/>
    <property type="match status" value="1"/>
</dbReference>
<sequence>MPIKILMPALSPTMREGNLARWLKKEGDKVNPGEVIAEIETDKATMEVESVDEGILAKIIIPQNSQNVPVNSLIAVLSEEGEDKADIDSFIAQNNSVSLSLKTDATLKKSNDSITNVEGIKHDSNKIFASPLAKRLAKIGDIRLENVQGSGPHGRIVKQDILSYDSSTSSNKIVYRDTEEYRSVPNNNIRKIIAKRLLESKQTVPHFYLSIECNVDKLLDVREDINKSFSEDKVTKISVNDFIILAVAKALQEVPNANASWSEDAIRYYNNVDISVAVAIENGIVTPIVKDANKKNIIELSREMKTLIKKAKDNKLTPIEFQGGGFTISNLGMYGIKNFNAIINTPQSCIMGVGASTKRAIVKNDQIIIATIMDVTLSADHRVIDGAVSAEFLASFKRFIENPVLMLI</sequence>
<evidence type="ECO:0000250" key="1"/>
<evidence type="ECO:0000255" key="2"/>
<evidence type="ECO:0000255" key="3">
    <source>
        <dbReference type="PROSITE-ProRule" id="PRU01066"/>
    </source>
</evidence>
<evidence type="ECO:0000255" key="4">
    <source>
        <dbReference type="PROSITE-ProRule" id="PRU01170"/>
    </source>
</evidence>
<evidence type="ECO:0000305" key="5"/>
<reference key="1">
    <citation type="journal article" date="1998" name="Nature">
        <title>The genome sequence of Rickettsia prowazekii and the origin of mitochondria.</title>
        <authorList>
            <person name="Andersson S.G.E."/>
            <person name="Zomorodipour A."/>
            <person name="Andersson J.O."/>
            <person name="Sicheritz-Ponten T."/>
            <person name="Alsmark U.C.M."/>
            <person name="Podowski R.M."/>
            <person name="Naeslund A.K."/>
            <person name="Eriksson A.-S."/>
            <person name="Winkler H.H."/>
            <person name="Kurland C.G."/>
        </authorList>
    </citation>
    <scope>NUCLEOTIDE SEQUENCE [LARGE SCALE GENOMIC DNA]</scope>
    <source>
        <strain>Madrid E</strain>
    </source>
</reference>
<protein>
    <recommendedName>
        <fullName>Dihydrolipoyllysine-residue acetyltransferase component of pyruvate dehydrogenase complex</fullName>
        <ecNumber>2.3.1.12</ecNumber>
    </recommendedName>
    <alternativeName>
        <fullName>Dihydrolipoamide acetyltransferase component of pyruvate dehydrogenase complex</fullName>
    </alternativeName>
    <alternativeName>
        <fullName>E2</fullName>
    </alternativeName>
</protein>